<proteinExistence type="inferred from homology"/>
<evidence type="ECO:0000255" key="1">
    <source>
        <dbReference type="HAMAP-Rule" id="MF_01341"/>
    </source>
</evidence>
<evidence type="ECO:0000256" key="2">
    <source>
        <dbReference type="SAM" id="MobiDB-lite"/>
    </source>
</evidence>
<evidence type="ECO:0000305" key="3"/>
<dbReference type="EMBL" id="CP000113">
    <property type="protein sequence ID" value="ABF87720.1"/>
    <property type="molecule type" value="Genomic_DNA"/>
</dbReference>
<dbReference type="RefSeq" id="WP_011553354.1">
    <property type="nucleotide sequence ID" value="NC_008095.1"/>
</dbReference>
<dbReference type="SMR" id="Q1D756"/>
<dbReference type="STRING" id="246197.MXAN_3318"/>
<dbReference type="EnsemblBacteria" id="ABF87720">
    <property type="protein sequence ID" value="ABF87720"/>
    <property type="gene ID" value="MXAN_3318"/>
</dbReference>
<dbReference type="GeneID" id="41360671"/>
<dbReference type="KEGG" id="mxa:MXAN_3318"/>
<dbReference type="eggNOG" id="COG0200">
    <property type="taxonomic scope" value="Bacteria"/>
</dbReference>
<dbReference type="HOGENOM" id="CLU_055188_4_2_7"/>
<dbReference type="OrthoDB" id="9810293at2"/>
<dbReference type="Proteomes" id="UP000002402">
    <property type="component" value="Chromosome"/>
</dbReference>
<dbReference type="GO" id="GO:0022625">
    <property type="term" value="C:cytosolic large ribosomal subunit"/>
    <property type="evidence" value="ECO:0007669"/>
    <property type="project" value="TreeGrafter"/>
</dbReference>
<dbReference type="GO" id="GO:0019843">
    <property type="term" value="F:rRNA binding"/>
    <property type="evidence" value="ECO:0007669"/>
    <property type="project" value="UniProtKB-UniRule"/>
</dbReference>
<dbReference type="GO" id="GO:0003735">
    <property type="term" value="F:structural constituent of ribosome"/>
    <property type="evidence" value="ECO:0007669"/>
    <property type="project" value="InterPro"/>
</dbReference>
<dbReference type="GO" id="GO:0006412">
    <property type="term" value="P:translation"/>
    <property type="evidence" value="ECO:0007669"/>
    <property type="project" value="UniProtKB-UniRule"/>
</dbReference>
<dbReference type="Gene3D" id="3.100.10.10">
    <property type="match status" value="1"/>
</dbReference>
<dbReference type="HAMAP" id="MF_01341">
    <property type="entry name" value="Ribosomal_uL15"/>
    <property type="match status" value="1"/>
</dbReference>
<dbReference type="InterPro" id="IPR030878">
    <property type="entry name" value="Ribosomal_uL15"/>
</dbReference>
<dbReference type="InterPro" id="IPR021131">
    <property type="entry name" value="Ribosomal_uL15/eL18"/>
</dbReference>
<dbReference type="InterPro" id="IPR036227">
    <property type="entry name" value="Ribosomal_uL15/eL18_sf"/>
</dbReference>
<dbReference type="InterPro" id="IPR005749">
    <property type="entry name" value="Ribosomal_uL15_bac-type"/>
</dbReference>
<dbReference type="InterPro" id="IPR001196">
    <property type="entry name" value="Ribosomal_uL15_CS"/>
</dbReference>
<dbReference type="NCBIfam" id="TIGR01071">
    <property type="entry name" value="rplO_bact"/>
    <property type="match status" value="1"/>
</dbReference>
<dbReference type="PANTHER" id="PTHR12934">
    <property type="entry name" value="50S RIBOSOMAL PROTEIN L15"/>
    <property type="match status" value="1"/>
</dbReference>
<dbReference type="PANTHER" id="PTHR12934:SF11">
    <property type="entry name" value="LARGE RIBOSOMAL SUBUNIT PROTEIN UL15M"/>
    <property type="match status" value="1"/>
</dbReference>
<dbReference type="Pfam" id="PF00828">
    <property type="entry name" value="Ribosomal_L27A"/>
    <property type="match status" value="1"/>
</dbReference>
<dbReference type="SUPFAM" id="SSF52080">
    <property type="entry name" value="Ribosomal proteins L15p and L18e"/>
    <property type="match status" value="1"/>
</dbReference>
<dbReference type="PROSITE" id="PS00475">
    <property type="entry name" value="RIBOSOMAL_L15"/>
    <property type="match status" value="1"/>
</dbReference>
<gene>
    <name evidence="1" type="primary">rplO</name>
    <name type="ordered locus">MXAN_3318</name>
</gene>
<name>RL15_MYXXD</name>
<accession>Q1D756</accession>
<feature type="chain" id="PRO_0000251530" description="Large ribosomal subunit protein uL15">
    <location>
        <begin position="1"/>
        <end position="175"/>
    </location>
</feature>
<feature type="region of interest" description="Disordered" evidence="2">
    <location>
        <begin position="1"/>
        <end position="65"/>
    </location>
</feature>
<feature type="region of interest" description="Disordered" evidence="2">
    <location>
        <begin position="155"/>
        <end position="175"/>
    </location>
</feature>
<feature type="compositionally biased region" description="Basic residues" evidence="2">
    <location>
        <begin position="12"/>
        <end position="21"/>
    </location>
</feature>
<feature type="compositionally biased region" description="Gly residues" evidence="2">
    <location>
        <begin position="22"/>
        <end position="38"/>
    </location>
</feature>
<feature type="compositionally biased region" description="Low complexity" evidence="2">
    <location>
        <begin position="160"/>
        <end position="169"/>
    </location>
</feature>
<comment type="function">
    <text evidence="1">Binds to the 23S rRNA.</text>
</comment>
<comment type="subunit">
    <text evidence="1">Part of the 50S ribosomal subunit.</text>
</comment>
<comment type="similarity">
    <text evidence="1">Belongs to the universal ribosomal protein uL15 family.</text>
</comment>
<organism>
    <name type="scientific">Myxococcus xanthus (strain DK1622)</name>
    <dbReference type="NCBI Taxonomy" id="246197"/>
    <lineage>
        <taxon>Bacteria</taxon>
        <taxon>Pseudomonadati</taxon>
        <taxon>Myxococcota</taxon>
        <taxon>Myxococcia</taxon>
        <taxon>Myxococcales</taxon>
        <taxon>Cystobacterineae</taxon>
        <taxon>Myxococcaceae</taxon>
        <taxon>Myxococcus</taxon>
    </lineage>
</organism>
<keyword id="KW-1185">Reference proteome</keyword>
<keyword id="KW-0687">Ribonucleoprotein</keyword>
<keyword id="KW-0689">Ribosomal protein</keyword>
<keyword id="KW-0694">RNA-binding</keyword>
<keyword id="KW-0699">rRNA-binding</keyword>
<sequence>MSTLNKLQRPARSWHRKKRVGRGQGSGLGKTAGRGGKGQKARTGNMRFEGFEGGQSPLQRRLPKFGFTPPNRTVYAVVNLSDLEQHFDAGATADVETLRKVGLVKGRYHGVKLLARGELTKKVTVVVHKASEAAKAAIQKAGGAVEEIPLVAHKPESAAKAHAGKGVKAPRQPKA</sequence>
<protein>
    <recommendedName>
        <fullName evidence="1">Large ribosomal subunit protein uL15</fullName>
    </recommendedName>
    <alternativeName>
        <fullName evidence="3">50S ribosomal protein L15</fullName>
    </alternativeName>
</protein>
<reference key="1">
    <citation type="journal article" date="2006" name="Proc. Natl. Acad. Sci. U.S.A.">
        <title>Evolution of sensory complexity recorded in a myxobacterial genome.</title>
        <authorList>
            <person name="Goldman B.S."/>
            <person name="Nierman W.C."/>
            <person name="Kaiser D."/>
            <person name="Slater S.C."/>
            <person name="Durkin A.S."/>
            <person name="Eisen J.A."/>
            <person name="Ronning C.M."/>
            <person name="Barbazuk W.B."/>
            <person name="Blanchard M."/>
            <person name="Field C."/>
            <person name="Halling C."/>
            <person name="Hinkle G."/>
            <person name="Iartchuk O."/>
            <person name="Kim H.S."/>
            <person name="Mackenzie C."/>
            <person name="Madupu R."/>
            <person name="Miller N."/>
            <person name="Shvartsbeyn A."/>
            <person name="Sullivan S.A."/>
            <person name="Vaudin M."/>
            <person name="Wiegand R."/>
            <person name="Kaplan H.B."/>
        </authorList>
    </citation>
    <scope>NUCLEOTIDE SEQUENCE [LARGE SCALE GENOMIC DNA]</scope>
    <source>
        <strain>DK1622</strain>
    </source>
</reference>